<sequence>MSVKIRLMRLGAKKKPFYRVVVSDSRVQRDGKFIEHVGFYDPMVPCGEPGFLKIDAERLSYWLGVGAQPTDRVSWFIKKGFVEVRPAGA</sequence>
<dbReference type="EMBL" id="CP000030">
    <property type="protein sequence ID" value="AAV86230.1"/>
    <property type="molecule type" value="Genomic_DNA"/>
</dbReference>
<dbReference type="RefSeq" id="WP_010266854.1">
    <property type="nucleotide sequence ID" value="NZ_AFMU01000001.1"/>
</dbReference>
<dbReference type="SMR" id="Q5PBU9"/>
<dbReference type="GeneID" id="7398758"/>
<dbReference type="KEGG" id="ama:AM059"/>
<dbReference type="HOGENOM" id="CLU_100590_5_0_5"/>
<dbReference type="GO" id="GO:0005737">
    <property type="term" value="C:cytoplasm"/>
    <property type="evidence" value="ECO:0007669"/>
    <property type="project" value="UniProtKB-ARBA"/>
</dbReference>
<dbReference type="GO" id="GO:0015935">
    <property type="term" value="C:small ribosomal subunit"/>
    <property type="evidence" value="ECO:0007669"/>
    <property type="project" value="TreeGrafter"/>
</dbReference>
<dbReference type="GO" id="GO:0003735">
    <property type="term" value="F:structural constituent of ribosome"/>
    <property type="evidence" value="ECO:0007669"/>
    <property type="project" value="InterPro"/>
</dbReference>
<dbReference type="GO" id="GO:0006412">
    <property type="term" value="P:translation"/>
    <property type="evidence" value="ECO:0007669"/>
    <property type="project" value="UniProtKB-UniRule"/>
</dbReference>
<dbReference type="Gene3D" id="3.30.1320.10">
    <property type="match status" value="1"/>
</dbReference>
<dbReference type="HAMAP" id="MF_00385">
    <property type="entry name" value="Ribosomal_bS16"/>
    <property type="match status" value="1"/>
</dbReference>
<dbReference type="InterPro" id="IPR000307">
    <property type="entry name" value="Ribosomal_bS16"/>
</dbReference>
<dbReference type="InterPro" id="IPR023803">
    <property type="entry name" value="Ribosomal_bS16_dom_sf"/>
</dbReference>
<dbReference type="NCBIfam" id="TIGR00002">
    <property type="entry name" value="S16"/>
    <property type="match status" value="1"/>
</dbReference>
<dbReference type="PANTHER" id="PTHR12919">
    <property type="entry name" value="30S RIBOSOMAL PROTEIN S16"/>
    <property type="match status" value="1"/>
</dbReference>
<dbReference type="PANTHER" id="PTHR12919:SF20">
    <property type="entry name" value="SMALL RIBOSOMAL SUBUNIT PROTEIN BS16M"/>
    <property type="match status" value="1"/>
</dbReference>
<dbReference type="Pfam" id="PF00886">
    <property type="entry name" value="Ribosomal_S16"/>
    <property type="match status" value="1"/>
</dbReference>
<dbReference type="SUPFAM" id="SSF54565">
    <property type="entry name" value="Ribosomal protein S16"/>
    <property type="match status" value="1"/>
</dbReference>
<accession>Q5PBU9</accession>
<feature type="chain" id="PRO_0000243768" description="Small ribosomal subunit protein bS16">
    <location>
        <begin position="1"/>
        <end position="89"/>
    </location>
</feature>
<comment type="similarity">
    <text evidence="1">Belongs to the bacterial ribosomal protein bS16 family.</text>
</comment>
<name>RS16_ANAMM</name>
<reference key="1">
    <citation type="journal article" date="2005" name="Proc. Natl. Acad. Sci. U.S.A.">
        <title>Complete genome sequencing of Anaplasma marginale reveals that the surface is skewed to two superfamilies of outer membrane proteins.</title>
        <authorList>
            <person name="Brayton K.A."/>
            <person name="Kappmeyer L.S."/>
            <person name="Herndon D.R."/>
            <person name="Dark M.J."/>
            <person name="Tibbals D.L."/>
            <person name="Palmer G.H."/>
            <person name="McGuire T.C."/>
            <person name="Knowles D.P. Jr."/>
        </authorList>
    </citation>
    <scope>NUCLEOTIDE SEQUENCE [LARGE SCALE GENOMIC DNA]</scope>
    <source>
        <strain>St. Maries</strain>
    </source>
</reference>
<evidence type="ECO:0000255" key="1">
    <source>
        <dbReference type="HAMAP-Rule" id="MF_00385"/>
    </source>
</evidence>
<evidence type="ECO:0000305" key="2"/>
<protein>
    <recommendedName>
        <fullName evidence="1">Small ribosomal subunit protein bS16</fullName>
    </recommendedName>
    <alternativeName>
        <fullName evidence="2">30S ribosomal protein S16</fullName>
    </alternativeName>
</protein>
<gene>
    <name evidence="1" type="primary">rpsP</name>
    <name type="ordered locus">AM059</name>
</gene>
<keyword id="KW-0687">Ribonucleoprotein</keyword>
<keyword id="KW-0689">Ribosomal protein</keyword>
<organism>
    <name type="scientific">Anaplasma marginale (strain St. Maries)</name>
    <dbReference type="NCBI Taxonomy" id="234826"/>
    <lineage>
        <taxon>Bacteria</taxon>
        <taxon>Pseudomonadati</taxon>
        <taxon>Pseudomonadota</taxon>
        <taxon>Alphaproteobacteria</taxon>
        <taxon>Rickettsiales</taxon>
        <taxon>Anaplasmataceae</taxon>
        <taxon>Anaplasma</taxon>
    </lineage>
</organism>
<proteinExistence type="inferred from homology"/>